<protein>
    <recommendedName>
        <fullName evidence="1">Peptide deformylase</fullName>
        <shortName evidence="1">PDF</shortName>
        <ecNumber evidence="1">3.5.1.88</ecNumber>
    </recommendedName>
    <alternativeName>
        <fullName evidence="1">Polypeptide deformylase</fullName>
    </alternativeName>
</protein>
<gene>
    <name evidence="1" type="primary">def</name>
    <name type="ordered locus">SpyM51641</name>
</gene>
<organism>
    <name type="scientific">Streptococcus pyogenes serotype M5 (strain Manfredo)</name>
    <dbReference type="NCBI Taxonomy" id="160491"/>
    <lineage>
        <taxon>Bacteria</taxon>
        <taxon>Bacillati</taxon>
        <taxon>Bacillota</taxon>
        <taxon>Bacilli</taxon>
        <taxon>Lactobacillales</taxon>
        <taxon>Streptococcaceae</taxon>
        <taxon>Streptococcus</taxon>
    </lineage>
</organism>
<name>DEF_STRPG</name>
<sequence>MSAQDKLIKPSHLITMDDIIREGNPTLRAVAKEVSLPLCDEDILLGEKMMQFLKHSQDPVMAEKLGLRAGVGLAAPQIDVSKRIIAVLVPNLPDKEGNPPKEAYSWQEVLYNPKIVSHSVQDAALSDGEGCLSVDRVVEGYVVRHARVTVDYYDKEGQQHRIKLKGYNAIVVQHEIDHINGVLFYDRINAKNPFETKEELLILD</sequence>
<feature type="chain" id="PRO_0000301108" description="Peptide deformylase">
    <location>
        <begin position="1"/>
        <end position="204"/>
    </location>
</feature>
<feature type="active site" evidence="1">
    <location>
        <position position="175"/>
    </location>
</feature>
<feature type="binding site" evidence="1">
    <location>
        <position position="131"/>
    </location>
    <ligand>
        <name>Fe cation</name>
        <dbReference type="ChEBI" id="CHEBI:24875"/>
    </ligand>
</feature>
<feature type="binding site" evidence="1">
    <location>
        <position position="174"/>
    </location>
    <ligand>
        <name>Fe cation</name>
        <dbReference type="ChEBI" id="CHEBI:24875"/>
    </ligand>
</feature>
<feature type="binding site" evidence="1">
    <location>
        <position position="178"/>
    </location>
    <ligand>
        <name>Fe cation</name>
        <dbReference type="ChEBI" id="CHEBI:24875"/>
    </ligand>
</feature>
<comment type="function">
    <text evidence="1">Removes the formyl group from the N-terminal Met of newly synthesized proteins. Requires at least a dipeptide for an efficient rate of reaction. N-terminal L-methionine is a prerequisite for activity but the enzyme has broad specificity at other positions.</text>
</comment>
<comment type="catalytic activity">
    <reaction evidence="1">
        <text>N-terminal N-formyl-L-methionyl-[peptide] + H2O = N-terminal L-methionyl-[peptide] + formate</text>
        <dbReference type="Rhea" id="RHEA:24420"/>
        <dbReference type="Rhea" id="RHEA-COMP:10639"/>
        <dbReference type="Rhea" id="RHEA-COMP:10640"/>
        <dbReference type="ChEBI" id="CHEBI:15377"/>
        <dbReference type="ChEBI" id="CHEBI:15740"/>
        <dbReference type="ChEBI" id="CHEBI:49298"/>
        <dbReference type="ChEBI" id="CHEBI:64731"/>
        <dbReference type="EC" id="3.5.1.88"/>
    </reaction>
</comment>
<comment type="cofactor">
    <cofactor evidence="1">
        <name>Fe(2+)</name>
        <dbReference type="ChEBI" id="CHEBI:29033"/>
    </cofactor>
    <text evidence="1">Binds 1 Fe(2+) ion.</text>
</comment>
<comment type="similarity">
    <text evidence="1">Belongs to the polypeptide deformylase family.</text>
</comment>
<reference key="1">
    <citation type="journal article" date="2007" name="J. Bacteriol.">
        <title>Complete genome of acute rheumatic fever-associated serotype M5 Streptococcus pyogenes strain Manfredo.</title>
        <authorList>
            <person name="Holden M.T.G."/>
            <person name="Scott A."/>
            <person name="Cherevach I."/>
            <person name="Chillingworth T."/>
            <person name="Churcher C."/>
            <person name="Cronin A."/>
            <person name="Dowd L."/>
            <person name="Feltwell T."/>
            <person name="Hamlin N."/>
            <person name="Holroyd S."/>
            <person name="Jagels K."/>
            <person name="Moule S."/>
            <person name="Mungall K."/>
            <person name="Quail M.A."/>
            <person name="Price C."/>
            <person name="Rabbinowitsch E."/>
            <person name="Sharp S."/>
            <person name="Skelton J."/>
            <person name="Whitehead S."/>
            <person name="Barrell B.G."/>
            <person name="Kehoe M."/>
            <person name="Parkhill J."/>
        </authorList>
    </citation>
    <scope>NUCLEOTIDE SEQUENCE [LARGE SCALE GENOMIC DNA]</scope>
    <source>
        <strain>Manfredo</strain>
    </source>
</reference>
<dbReference type="EC" id="3.5.1.88" evidence="1"/>
<dbReference type="EMBL" id="AM295007">
    <property type="protein sequence ID" value="CAM30962.1"/>
    <property type="molecule type" value="Genomic_DNA"/>
</dbReference>
<dbReference type="RefSeq" id="WP_002982624.1">
    <property type="nucleotide sequence ID" value="NC_009332.1"/>
</dbReference>
<dbReference type="SMR" id="A2RGI0"/>
<dbReference type="GeneID" id="69901455"/>
<dbReference type="KEGG" id="spf:SpyM51641"/>
<dbReference type="HOGENOM" id="CLU_061901_4_0_9"/>
<dbReference type="GO" id="GO:0046872">
    <property type="term" value="F:metal ion binding"/>
    <property type="evidence" value="ECO:0007669"/>
    <property type="project" value="UniProtKB-KW"/>
</dbReference>
<dbReference type="GO" id="GO:0042586">
    <property type="term" value="F:peptide deformylase activity"/>
    <property type="evidence" value="ECO:0007669"/>
    <property type="project" value="UniProtKB-UniRule"/>
</dbReference>
<dbReference type="GO" id="GO:0043686">
    <property type="term" value="P:co-translational protein modification"/>
    <property type="evidence" value="ECO:0007669"/>
    <property type="project" value="TreeGrafter"/>
</dbReference>
<dbReference type="GO" id="GO:0006412">
    <property type="term" value="P:translation"/>
    <property type="evidence" value="ECO:0007669"/>
    <property type="project" value="UniProtKB-UniRule"/>
</dbReference>
<dbReference type="CDD" id="cd00487">
    <property type="entry name" value="Pep_deformylase"/>
    <property type="match status" value="1"/>
</dbReference>
<dbReference type="FunFam" id="3.90.45.10:FF:000002">
    <property type="entry name" value="Peptide deformylase"/>
    <property type="match status" value="1"/>
</dbReference>
<dbReference type="Gene3D" id="3.90.45.10">
    <property type="entry name" value="Peptide deformylase"/>
    <property type="match status" value="1"/>
</dbReference>
<dbReference type="HAMAP" id="MF_00163">
    <property type="entry name" value="Pep_deformylase"/>
    <property type="match status" value="1"/>
</dbReference>
<dbReference type="InterPro" id="IPR023635">
    <property type="entry name" value="Peptide_deformylase"/>
</dbReference>
<dbReference type="InterPro" id="IPR036821">
    <property type="entry name" value="Peptide_deformylase_sf"/>
</dbReference>
<dbReference type="NCBIfam" id="TIGR00079">
    <property type="entry name" value="pept_deformyl"/>
    <property type="match status" value="1"/>
</dbReference>
<dbReference type="PANTHER" id="PTHR10458">
    <property type="entry name" value="PEPTIDE DEFORMYLASE"/>
    <property type="match status" value="1"/>
</dbReference>
<dbReference type="PANTHER" id="PTHR10458:SF8">
    <property type="entry name" value="PEPTIDE DEFORMYLASE 2"/>
    <property type="match status" value="1"/>
</dbReference>
<dbReference type="Pfam" id="PF01327">
    <property type="entry name" value="Pep_deformylase"/>
    <property type="match status" value="1"/>
</dbReference>
<dbReference type="PIRSF" id="PIRSF004749">
    <property type="entry name" value="Pep_def"/>
    <property type="match status" value="1"/>
</dbReference>
<dbReference type="PRINTS" id="PR01576">
    <property type="entry name" value="PDEFORMYLASE"/>
</dbReference>
<dbReference type="SUPFAM" id="SSF56420">
    <property type="entry name" value="Peptide deformylase"/>
    <property type="match status" value="1"/>
</dbReference>
<keyword id="KW-0378">Hydrolase</keyword>
<keyword id="KW-0408">Iron</keyword>
<keyword id="KW-0479">Metal-binding</keyword>
<keyword id="KW-0648">Protein biosynthesis</keyword>
<evidence type="ECO:0000255" key="1">
    <source>
        <dbReference type="HAMAP-Rule" id="MF_00163"/>
    </source>
</evidence>
<proteinExistence type="inferred from homology"/>
<accession>A2RGI0</accession>